<organism>
    <name type="scientific">Escherichia phage 186</name>
    <name type="common">Bacteriophage 186</name>
    <dbReference type="NCBI Taxonomy" id="29252"/>
    <lineage>
        <taxon>Viruses</taxon>
        <taxon>Duplodnaviria</taxon>
        <taxon>Heunggongvirae</taxon>
        <taxon>Uroviricota</taxon>
        <taxon>Caudoviricetes</taxon>
        <taxon>Peduoviridae</taxon>
        <taxon>Eganvirus</taxon>
    </lineage>
</organism>
<protein>
    <recommendedName>
        <fullName evidence="3">Probable baseplate hub protein</fullName>
    </recommendedName>
    <alternativeName>
        <fullName>Gene D protein</fullName>
    </alternativeName>
    <alternativeName>
        <fullName>GpD</fullName>
    </alternativeName>
    <alternativeName>
        <fullName>Late control gene D protein</fullName>
    </alternativeName>
</protein>
<dbReference type="EMBL" id="U32222">
    <property type="protein sequence ID" value="AAC34172.1"/>
    <property type="molecule type" value="Genomic_DNA"/>
</dbReference>
<dbReference type="PIR" id="S07277">
    <property type="entry name" value="S07277"/>
</dbReference>
<dbReference type="RefSeq" id="NP_052275.1">
    <property type="nucleotide sequence ID" value="NC_001317.1"/>
</dbReference>
<dbReference type="SMR" id="P21679"/>
<dbReference type="GeneID" id="1262444"/>
<dbReference type="KEGG" id="vg:1262444"/>
<dbReference type="OrthoDB" id="3609at10239"/>
<dbReference type="Proteomes" id="UP000000369">
    <property type="component" value="Segment"/>
</dbReference>
<dbReference type="GO" id="GO:0098025">
    <property type="term" value="C:virus tail, baseplate"/>
    <property type="evidence" value="ECO:0007669"/>
    <property type="project" value="UniProtKB-KW"/>
</dbReference>
<dbReference type="InterPro" id="IPR052726">
    <property type="entry name" value="Phage_Baseplate_Hub"/>
</dbReference>
<dbReference type="PANTHER" id="PTHR35862">
    <property type="entry name" value="FELS-2 PROPHAGE PROTEIN"/>
    <property type="match status" value="1"/>
</dbReference>
<dbReference type="PANTHER" id="PTHR35862:SF3">
    <property type="entry name" value="FELS-2 PROPHAGE PROTEIN"/>
    <property type="match status" value="1"/>
</dbReference>
<dbReference type="Pfam" id="PF05954">
    <property type="entry name" value="Phage_GPD"/>
    <property type="match status" value="1"/>
</dbReference>
<dbReference type="SUPFAM" id="SSF69279">
    <property type="entry name" value="Phage tail proteins"/>
    <property type="match status" value="1"/>
</dbReference>
<keyword id="KW-0426">Late protein</keyword>
<keyword id="KW-1185">Reference proteome</keyword>
<keyword id="KW-1226">Viral baseplate protein</keyword>
<keyword id="KW-1227">Viral tail protein</keyword>
<keyword id="KW-0946">Virion</keyword>
<organismHost>
    <name type="scientific">Escherichia coli</name>
    <dbReference type="NCBI Taxonomy" id="562"/>
</organismHost>
<proteinExistence type="inferred from homology"/>
<comment type="function">
    <text evidence="1">Putative baseplate hub protein.</text>
</comment>
<comment type="subunit">
    <text evidence="1">Homotrimer.</text>
</comment>
<comment type="subcellular location">
    <subcellularLocation>
        <location evidence="3">Virion</location>
    </subcellularLocation>
</comment>
<comment type="induction">
    <text evidence="3">Expressed in the late phase of the viral replicative cycle.</text>
</comment>
<comment type="similarity">
    <text evidence="3">Belongs to the P2likevirus baseplate hub protein family.</text>
</comment>
<evidence type="ECO:0000250" key="1">
    <source>
        <dbReference type="UniProtKB" id="P10312"/>
    </source>
</evidence>
<evidence type="ECO:0000256" key="2">
    <source>
        <dbReference type="SAM" id="MobiDB-lite"/>
    </source>
</evidence>
<evidence type="ECO:0000305" key="3"/>
<sequence>MITGMTIDAGTSLAPAFMLTLNSQDITSNFSDRLISLTMTDNRGFEADQLDIELDDTDGKVELPLRGAVLTLWLGWQGSALLNKGDFTVDEIEHRGAPDILTIRARSADFRGTLNSRREESWHDTTIGELVSTIAKRNKLTASVADSLKKIPVPHIDQSQESDAVFLTRLADRNGATVSVKAGKLLFLKAGSAMTASGKPVPQMTLTRNDGDRHQFAIADRGAYTGVTAKWLHTKDPKPQKQKVTLKRKPKEKHLRALEHPKAKPVSKKTKAKKEPEAREGEYMAGEADNVLALTTVYASKAQAMRAAQAKWDKLQRGVAEFSITLALGRADLFPETPVRVSGFKRVIDEQAWLISKVTHNLNNSGFTTGLELEVKLSDVEYNAESDDE</sequence>
<name>BPD_BP186</name>
<accession>P21679</accession>
<feature type="chain" id="PRO_0000165299" description="Probable baseplate hub protein">
    <location>
        <begin position="1"/>
        <end position="389"/>
    </location>
</feature>
<feature type="region of interest" description="Disordered" evidence="2">
    <location>
        <begin position="236"/>
        <end position="281"/>
    </location>
</feature>
<feature type="compositionally biased region" description="Basic residues" evidence="2">
    <location>
        <begin position="240"/>
        <end position="254"/>
    </location>
</feature>
<feature type="compositionally biased region" description="Basic residues" evidence="2">
    <location>
        <begin position="263"/>
        <end position="272"/>
    </location>
</feature>
<reference key="1">
    <citation type="journal article" date="1998" name="Virology">
        <title>The late-expressed region of the temperate coliphage 186 genome.</title>
        <authorList>
            <person name="Portelli R."/>
            <person name="Dodd I.B."/>
            <person name="Xue Q."/>
            <person name="Egan J.B."/>
        </authorList>
    </citation>
    <scope>NUCLEOTIDE SEQUENCE [GENOMIC DNA]</scope>
    <source>
        <strain>186CITSP</strain>
    </source>
</reference>
<reference key="2">
    <citation type="journal article" date="1986" name="J. Mol. Biol.">
        <title>Control of gene expression in the P2-related template coliphages. III. DNA sequence of the major control region of phage 186.</title>
        <authorList>
            <person name="Kalionis B."/>
            <person name="Dodd I.B."/>
            <person name="Egan J.B."/>
        </authorList>
    </citation>
    <scope>NUCLEOTIDE SEQUENCE [GENOMIC DNA] OF 315-389</scope>
    <source>
        <strain>186CITSP</strain>
    </source>
</reference>
<reference key="3">
    <citation type="journal article" date="1992" name="Mol. Microbiol.">
        <title>Control of gene expression in the temperate coliphage 186. X. The cI repressor directly represses transcription of the late control gene B.</title>
        <authorList>
            <person name="Dibbens J.A."/>
            <person name="Gregory S.L."/>
            <person name="Egan J.B."/>
        </authorList>
    </citation>
    <scope>NUCLEOTIDE SEQUENCE [GENOMIC DNA] OF 315-389</scope>
</reference>
<gene>
    <name type="primary">D</name>
</gene>